<comment type="function">
    <text evidence="2">RNA-binding component of the eukaryotic translation initiation factor 3 (eIF-3) complex, which is involved in protein synthesis of a specialized repertoire of mRNAs and, together with other initiation factors, stimulates binding of mRNA and methionyl-tRNAi to the 40S ribosome. The eIF-3 complex specifically targets and initiates translation of a subset of mRNAs involved in cell proliferation. This subunit can bind 18S rRNA.</text>
</comment>
<comment type="subunit">
    <text evidence="2">Component of the eukaryotic translation initiation factor 3 (eIF-3) complex. The eIF-3 complex interacts with pix.</text>
</comment>
<comment type="subcellular location">
    <subcellularLocation>
        <location evidence="2">Cytoplasm</location>
    </subcellularLocation>
</comment>
<comment type="similarity">
    <text evidence="2">Belongs to the eIF-3 subunit G family.</text>
</comment>
<proteinExistence type="inferred from homology"/>
<gene>
    <name evidence="1" type="primary">eIF3g1</name>
    <name evidence="2" type="synonym">eIF3-S4</name>
    <name evidence="1" type="synonym">eIF3ga</name>
    <name type="ORF">GL12937</name>
</gene>
<keyword id="KW-0963">Cytoplasm</keyword>
<keyword id="KW-0396">Initiation factor</keyword>
<keyword id="KW-0648">Protein biosynthesis</keyword>
<keyword id="KW-1185">Reference proteome</keyword>
<keyword id="KW-0694">RNA-binding</keyword>
<accession>B4GUY6</accession>
<sequence length="269" mass="29932">MPGVETIKSSWADEVELDYGGLPPTTENVENGHKYVTEYKYNKDDKKTKVVRTYKISKQVVPKTVAKRRTWTKFGESKSDKPGPNSHTTMVSEEIIMQFLNSKEDEKANDPLLDPTKNIAKCRICNGEHWSVNCPYKGTAMDTNLMEKKAAAAASAAVDAPKSGKYVPPFLKDSQKGGLGMRGRDDTAAIRISNLSESMTEADLEELVKKIGPQSKMYLARDKNTGLCKGFAYVHFKQRKDAAAAIEILNGHGYDHLILSVEWSKPQNN</sequence>
<protein>
    <recommendedName>
        <fullName evidence="1">Eukaryotic translation initiation factor 3 subunit G-1</fullName>
    </recommendedName>
    <alternativeName>
        <fullName evidence="2">Eukaryotic translation initiation factor 3 RNA-binding subunit 1</fullName>
        <shortName evidence="2">eIF-3 RNA-binding subunit 1</shortName>
    </alternativeName>
    <alternativeName>
        <fullName evidence="2">Eukaryotic translation initiation factor 3 subunit 4-1</fullName>
    </alternativeName>
</protein>
<organism>
    <name type="scientific">Drosophila persimilis</name>
    <name type="common">Fruit fly</name>
    <dbReference type="NCBI Taxonomy" id="7234"/>
    <lineage>
        <taxon>Eukaryota</taxon>
        <taxon>Metazoa</taxon>
        <taxon>Ecdysozoa</taxon>
        <taxon>Arthropoda</taxon>
        <taxon>Hexapoda</taxon>
        <taxon>Insecta</taxon>
        <taxon>Pterygota</taxon>
        <taxon>Neoptera</taxon>
        <taxon>Endopterygota</taxon>
        <taxon>Diptera</taxon>
        <taxon>Brachycera</taxon>
        <taxon>Muscomorpha</taxon>
        <taxon>Ephydroidea</taxon>
        <taxon>Drosophilidae</taxon>
        <taxon>Drosophila</taxon>
        <taxon>Sophophora</taxon>
    </lineage>
</organism>
<dbReference type="EMBL" id="CH479192">
    <property type="protein sequence ID" value="EDW26523.1"/>
    <property type="molecule type" value="Genomic_DNA"/>
</dbReference>
<dbReference type="SMR" id="B4GUY6"/>
<dbReference type="STRING" id="7234.B4GUY6"/>
<dbReference type="EnsemblMetazoa" id="FBtr0178552">
    <property type="protein sequence ID" value="FBpp0177044"/>
    <property type="gene ID" value="FBgn0150543"/>
</dbReference>
<dbReference type="EnsemblMetazoa" id="XM_002022452.2">
    <property type="protein sequence ID" value="XP_002022488.1"/>
    <property type="gene ID" value="LOC6597394"/>
</dbReference>
<dbReference type="GeneID" id="6597394"/>
<dbReference type="KEGG" id="dpe:6597394"/>
<dbReference type="CTD" id="31243"/>
<dbReference type="eggNOG" id="KOG0122">
    <property type="taxonomic scope" value="Eukaryota"/>
</dbReference>
<dbReference type="HOGENOM" id="CLU_034595_0_0_1"/>
<dbReference type="OMA" id="ICQGDHF"/>
<dbReference type="OrthoDB" id="639027at2759"/>
<dbReference type="PhylomeDB" id="B4GUY6"/>
<dbReference type="Proteomes" id="UP000008744">
    <property type="component" value="Unassembled WGS sequence"/>
</dbReference>
<dbReference type="GO" id="GO:0016282">
    <property type="term" value="C:eukaryotic 43S preinitiation complex"/>
    <property type="evidence" value="ECO:0007669"/>
    <property type="project" value="UniProtKB-UniRule"/>
</dbReference>
<dbReference type="GO" id="GO:0033290">
    <property type="term" value="C:eukaryotic 48S preinitiation complex"/>
    <property type="evidence" value="ECO:0007669"/>
    <property type="project" value="UniProtKB-UniRule"/>
</dbReference>
<dbReference type="GO" id="GO:0005852">
    <property type="term" value="C:eukaryotic translation initiation factor 3 complex"/>
    <property type="evidence" value="ECO:0007669"/>
    <property type="project" value="UniProtKB-UniRule"/>
</dbReference>
<dbReference type="GO" id="GO:0003723">
    <property type="term" value="F:RNA binding"/>
    <property type="evidence" value="ECO:0007669"/>
    <property type="project" value="UniProtKB-UniRule"/>
</dbReference>
<dbReference type="GO" id="GO:0003743">
    <property type="term" value="F:translation initiation factor activity"/>
    <property type="evidence" value="ECO:0007669"/>
    <property type="project" value="UniProtKB-UniRule"/>
</dbReference>
<dbReference type="GO" id="GO:0001732">
    <property type="term" value="P:formation of cytoplasmic translation initiation complex"/>
    <property type="evidence" value="ECO:0007669"/>
    <property type="project" value="UniProtKB-UniRule"/>
</dbReference>
<dbReference type="CDD" id="cd12933">
    <property type="entry name" value="eIF3G"/>
    <property type="match status" value="1"/>
</dbReference>
<dbReference type="CDD" id="cd12408">
    <property type="entry name" value="RRM_eIF3G_like"/>
    <property type="match status" value="1"/>
</dbReference>
<dbReference type="FunFam" id="3.30.70.330:FF:000828">
    <property type="entry name" value="Eukaryotic translation initiation factor 3 subunit G"/>
    <property type="match status" value="1"/>
</dbReference>
<dbReference type="Gene3D" id="3.30.70.330">
    <property type="match status" value="1"/>
</dbReference>
<dbReference type="HAMAP" id="MF_03006">
    <property type="entry name" value="eIF3g"/>
    <property type="match status" value="1"/>
</dbReference>
<dbReference type="InterPro" id="IPR017334">
    <property type="entry name" value="eIF3_g"/>
</dbReference>
<dbReference type="InterPro" id="IPR024675">
    <property type="entry name" value="eIF3g_N"/>
</dbReference>
<dbReference type="InterPro" id="IPR034240">
    <property type="entry name" value="eIF3G_RRM"/>
</dbReference>
<dbReference type="InterPro" id="IPR012677">
    <property type="entry name" value="Nucleotide-bd_a/b_plait_sf"/>
</dbReference>
<dbReference type="InterPro" id="IPR035979">
    <property type="entry name" value="RBD_domain_sf"/>
</dbReference>
<dbReference type="InterPro" id="IPR000504">
    <property type="entry name" value="RRM_dom"/>
</dbReference>
<dbReference type="PANTHER" id="PTHR10352">
    <property type="entry name" value="EUKARYOTIC TRANSLATION INITIATION FACTOR 3 SUBUNIT G"/>
    <property type="match status" value="1"/>
</dbReference>
<dbReference type="Pfam" id="PF12353">
    <property type="entry name" value="eIF3g"/>
    <property type="match status" value="1"/>
</dbReference>
<dbReference type="Pfam" id="PF00076">
    <property type="entry name" value="RRM_1"/>
    <property type="match status" value="1"/>
</dbReference>
<dbReference type="PIRSF" id="PIRSF037949">
    <property type="entry name" value="Transl_init_eIF-3_RNA-bind"/>
    <property type="match status" value="1"/>
</dbReference>
<dbReference type="SMART" id="SM00360">
    <property type="entry name" value="RRM"/>
    <property type="match status" value="1"/>
</dbReference>
<dbReference type="SUPFAM" id="SSF54928">
    <property type="entry name" value="RNA-binding domain, RBD"/>
    <property type="match status" value="1"/>
</dbReference>
<dbReference type="PROSITE" id="PS50102">
    <property type="entry name" value="RRM"/>
    <property type="match status" value="1"/>
</dbReference>
<evidence type="ECO:0000250" key="1">
    <source>
        <dbReference type="UniProtKB" id="Q9W4X7"/>
    </source>
</evidence>
<evidence type="ECO:0000255" key="2">
    <source>
        <dbReference type="HAMAP-Rule" id="MF_03006"/>
    </source>
</evidence>
<feature type="chain" id="PRO_0000365417" description="Eukaryotic translation initiation factor 3 subunit G-1">
    <location>
        <begin position="1"/>
        <end position="269"/>
    </location>
</feature>
<feature type="domain" description="RRM" evidence="2">
    <location>
        <begin position="188"/>
        <end position="266"/>
    </location>
</feature>
<name>EI3G1_DROPE</name>
<reference key="1">
    <citation type="journal article" date="2007" name="Nature">
        <title>Evolution of genes and genomes on the Drosophila phylogeny.</title>
        <authorList>
            <consortium name="Drosophila 12 genomes consortium"/>
        </authorList>
    </citation>
    <scope>NUCLEOTIDE SEQUENCE [LARGE SCALE GENOMIC DNA]</scope>
    <source>
        <strain>MSH-3 / Tucson 14011-0111.49</strain>
    </source>
</reference>